<proteinExistence type="inferred from homology"/>
<accession>P25965</accession>
<evidence type="ECO:0000250" key="1"/>
<evidence type="ECO:0000255" key="2"/>
<evidence type="ECO:0000305" key="3"/>
<organism>
    <name type="scientific">Alkalihalobacillus alcalophilus</name>
    <name type="common">Bacillus alcalophilus</name>
    <dbReference type="NCBI Taxonomy" id="1445"/>
    <lineage>
        <taxon>Bacteria</taxon>
        <taxon>Bacillati</taxon>
        <taxon>Bacillota</taxon>
        <taxon>Bacilli</taxon>
        <taxon>Bacillales</taxon>
        <taxon>Bacillaceae</taxon>
        <taxon>Alkalihalobacillus</taxon>
    </lineage>
</organism>
<reference key="1">
    <citation type="journal article" date="1992" name="Res. Microbiol.">
        <title>Two unrelated alkaliphilic Bacillus species possess identical deviations in sequence from those of other prokaryotes in regions of F0 proposed to be involved in proton translocation through the ATP synthase.</title>
        <authorList>
            <person name="Ivey D.M."/>
            <person name="Krulwich T.A."/>
        </authorList>
    </citation>
    <scope>NUCLEOTIDE SEQUENCE [GENOMIC DNA]</scope>
</reference>
<protein>
    <recommendedName>
        <fullName>ATP synthase subunit a</fullName>
    </recommendedName>
    <alternativeName>
        <fullName>ATP synthase F0 sector subunit a</fullName>
    </alternativeName>
    <alternativeName>
        <fullName>F-ATPase subunit 6</fullName>
    </alternativeName>
</protein>
<comment type="function">
    <text evidence="1">Key component of the proton channel; it plays a direct role in the translocation of protons across the membrane.</text>
</comment>
<comment type="subunit">
    <text evidence="1">F-type ATPases have 2 components, CF(1) - the catalytic core - and CF(0) - the membrane proton channel. CF(1) has five subunits: alpha(3), beta(3), gamma(1), delta(1), epsilon(1). CF(0) has three main subunits: a(1), b(2) and c(9-12). The alpha and beta chains form an alternating ring which encloses part of the gamma chain. CF(1) is attached to CF(0) by a central stalk formed by the gamma and epsilon chains, while a peripheral stalk is formed by the delta and b chains (By similarity).</text>
</comment>
<comment type="subcellular location">
    <subcellularLocation>
        <location evidence="1">Cell membrane</location>
        <topology evidence="1">Multi-pass membrane protein</topology>
    </subcellularLocation>
</comment>
<comment type="similarity">
    <text evidence="3">Belongs to the ATPase A chain family.</text>
</comment>
<feature type="chain" id="PRO_0000082042" description="ATP synthase subunit a">
    <location>
        <begin position="1" status="less than"/>
        <end position="78"/>
    </location>
</feature>
<feature type="transmembrane region" description="Helical" evidence="2">
    <location>
        <begin position="13"/>
        <end position="33"/>
    </location>
</feature>
<feature type="transmembrane region" description="Helical" evidence="2">
    <location>
        <begin position="35"/>
        <end position="55"/>
    </location>
</feature>
<feature type="transmembrane region" description="Helical" evidence="2">
    <location>
        <begin position="57"/>
        <end position="77"/>
    </location>
</feature>
<feature type="non-terminal residue">
    <location>
        <position position="1"/>
    </location>
</feature>
<dbReference type="EMBL" id="M84712">
    <property type="protein sequence ID" value="AAA22254.1"/>
    <property type="molecule type" value="Genomic_DNA"/>
</dbReference>
<dbReference type="PIR" id="I39783">
    <property type="entry name" value="I39783"/>
</dbReference>
<dbReference type="SMR" id="P25965"/>
<dbReference type="GO" id="GO:0005886">
    <property type="term" value="C:plasma membrane"/>
    <property type="evidence" value="ECO:0007669"/>
    <property type="project" value="UniProtKB-SubCell"/>
</dbReference>
<dbReference type="GO" id="GO:0045259">
    <property type="term" value="C:proton-transporting ATP synthase complex"/>
    <property type="evidence" value="ECO:0007669"/>
    <property type="project" value="UniProtKB-KW"/>
</dbReference>
<dbReference type="GO" id="GO:0046933">
    <property type="term" value="F:proton-transporting ATP synthase activity, rotational mechanism"/>
    <property type="evidence" value="ECO:0007669"/>
    <property type="project" value="TreeGrafter"/>
</dbReference>
<dbReference type="GO" id="GO:0042777">
    <property type="term" value="P:proton motive force-driven plasma membrane ATP synthesis"/>
    <property type="evidence" value="ECO:0007669"/>
    <property type="project" value="TreeGrafter"/>
</dbReference>
<dbReference type="Gene3D" id="1.20.120.220">
    <property type="entry name" value="ATP synthase, F0 complex, subunit A"/>
    <property type="match status" value="1"/>
</dbReference>
<dbReference type="InterPro" id="IPR045082">
    <property type="entry name" value="ATP_syn_F0_a_bact/chloroplast"/>
</dbReference>
<dbReference type="InterPro" id="IPR000568">
    <property type="entry name" value="ATP_synth_F0_asu"/>
</dbReference>
<dbReference type="InterPro" id="IPR023011">
    <property type="entry name" value="ATP_synth_F0_asu_AS"/>
</dbReference>
<dbReference type="InterPro" id="IPR035908">
    <property type="entry name" value="F0_ATP_A_sf"/>
</dbReference>
<dbReference type="PANTHER" id="PTHR42823">
    <property type="entry name" value="ATP SYNTHASE SUBUNIT A, CHLOROPLASTIC"/>
    <property type="match status" value="1"/>
</dbReference>
<dbReference type="PANTHER" id="PTHR42823:SF3">
    <property type="entry name" value="ATP SYNTHASE SUBUNIT A, CHLOROPLASTIC"/>
    <property type="match status" value="1"/>
</dbReference>
<dbReference type="Pfam" id="PF00119">
    <property type="entry name" value="ATP-synt_A"/>
    <property type="match status" value="1"/>
</dbReference>
<dbReference type="PRINTS" id="PR00123">
    <property type="entry name" value="ATPASEA"/>
</dbReference>
<dbReference type="SUPFAM" id="SSF81336">
    <property type="entry name" value="F1F0 ATP synthase subunit A"/>
    <property type="match status" value="1"/>
</dbReference>
<dbReference type="PROSITE" id="PS00449">
    <property type="entry name" value="ATPASE_A"/>
    <property type="match status" value="1"/>
</dbReference>
<gene>
    <name type="primary">atpB</name>
</gene>
<name>ATP6_ALKAL</name>
<keyword id="KW-0066">ATP synthesis</keyword>
<keyword id="KW-1003">Cell membrane</keyword>
<keyword id="KW-0138">CF(0)</keyword>
<keyword id="KW-0375">Hydrogen ion transport</keyword>
<keyword id="KW-0406">Ion transport</keyword>
<keyword id="KW-0472">Membrane</keyword>
<keyword id="KW-0812">Transmembrane</keyword>
<keyword id="KW-1133">Transmembrane helix</keyword>
<keyword id="KW-0813">Transport</keyword>
<sequence length="78" mass="8566">EEFANTLTLGMRLFGNVYAKEMLMILLVGLGTSGFLGAFGAFLPLIVWQAFGMFIGSLQAFIFAMLAMVYMAHKVEAH</sequence>